<gene>
    <name type="primary">PACRG</name>
    <name type="synonym">GLUP</name>
</gene>
<name>PACRG_HUMAN</name>
<comment type="function">
    <text evidence="2 4">Microtubule inner protein (MIP) part of the dynein-decorated doublet microtubules (DMTs) in cilia axoneme, which is required for motile cilia beating (PubMed:36191189). Suppresses cell death induced by accumulation of unfolded Pael receptor (Pael-R, a substrate of Parkin) (PubMed:14532270). Facilitates the formation of inclusions consisting of Pael-R, molecular chaperones, protein degradation molecules and itself when proteasome is inhibited (PubMed:14532270). May play an important role in the formation of Lewy bodies and protection of dopaminergic neurons against Parkinson disease (PubMed:14532270).</text>
</comment>
<comment type="subunit">
    <text evidence="1 2">Microtubule inner protein component of sperm flagellar doublet microtubules (By similarity). Forms a large molecular chaperone complex containing heat shock proteins 70 and 90 and chaperonin components (PubMed:14532270). Interacts with STIP1, PRKN, GPR37, HSPA8, TCP1/CCT1, CCT2, CCT3, CCT4, CCT5, CCT6A, CCT7 and CCT8 (PubMed:14532270). Interacts with MEIG1 (By similarity).</text>
</comment>
<comment type="interaction">
    <interactant intactId="EBI-11927350">
        <id>Q96M98</id>
    </interactant>
    <interactant intactId="EBI-6426427">
        <id>Q8N4N3</id>
        <label>KLHL36</label>
    </interactant>
    <organismsDiffer>false</organismsDiffer>
    <experiments>2</experiments>
</comment>
<comment type="interaction">
    <interactant intactId="EBI-11945452">
        <id>Q96M98-2</id>
    </interactant>
    <interactant intactId="EBI-18583441">
        <id>Q5JSS6</id>
        <label>MEIG1</label>
    </interactant>
    <organismsDiffer>false</organismsDiffer>
    <experiments>5</experiments>
</comment>
<comment type="subcellular location">
    <subcellularLocation>
        <location evidence="4">Cytoplasm</location>
        <location evidence="4">Cytoskeleton</location>
        <location evidence="4">Cilium axoneme</location>
    </subcellularLocation>
    <subcellularLocation>
        <location evidence="1">Cytoplasm</location>
        <location evidence="1">Cytoskeleton</location>
        <location evidence="1">Flagellum axoneme</location>
    </subcellularLocation>
</comment>
<comment type="alternative products">
    <event type="alternative splicing"/>
    <isoform>
        <id>Q96M98-1</id>
        <name>1</name>
        <sequence type="displayed"/>
    </isoform>
    <isoform>
        <id>Q96M98-2</id>
        <name>2</name>
        <sequence type="described" ref="VSP_010033"/>
    </isoform>
</comment>
<comment type="tissue specificity">
    <text evidence="3 4">Expressed in all immune tissues, spleen, lymph nodes, thymus, tonsils, leukocyte and bone marrow. Expressed also in heart, brain, skeletal muscle, kidney, lung and pancreas. Expressed in primary Schwann cells and very weakly by monocyte-derived macrophages the primary host cells of Mycobacterium leprae, the causative agent of leprosy. Component of Lewy bodies, intraneuronal inclusions found in the brain of Parkinson disease patients.</text>
</comment>
<comment type="polymorphism">
    <text evidence="3">Involved in susceptibility to leprosy (LPRS2) [MIM:607572]. LPRS2 is associated with polymorphisms in the 5'-regulatory region shared by the PRKN gene.</text>
</comment>
<comment type="miscellaneous">
    <text>Linked to PRKN in a head-to-head arrangement on opposite DNA strands and share a common 5'-flanking promoter region.</text>
</comment>
<comment type="miscellaneous">
    <molecule>Isoform 2</molecule>
    <text evidence="7">May be due to exon skipping.</text>
</comment>
<protein>
    <recommendedName>
        <fullName>Parkin coregulated gene protein</fullName>
    </recommendedName>
    <alternativeName>
        <fullName>Molecular chaperone/chaperonin-binding protein</fullName>
    </alternativeName>
    <alternativeName>
        <fullName>PARK2 coregulated gene protein</fullName>
    </alternativeName>
</protein>
<evidence type="ECO:0000250" key="1">
    <source>
        <dbReference type="UniProtKB" id="Q9DAK2"/>
    </source>
</evidence>
<evidence type="ECO:0000269" key="2">
    <source>
    </source>
</evidence>
<evidence type="ECO:0000269" key="3">
    <source>
    </source>
</evidence>
<evidence type="ECO:0000269" key="4">
    <source>
    </source>
</evidence>
<evidence type="ECO:0000303" key="5">
    <source>
    </source>
</evidence>
<evidence type="ECO:0000303" key="6">
    <source>
    </source>
</evidence>
<evidence type="ECO:0000305" key="7"/>
<evidence type="ECO:0007744" key="8">
    <source>
        <dbReference type="PDB" id="7UNG"/>
    </source>
</evidence>
<evidence type="ECO:0007829" key="9">
    <source>
        <dbReference type="PDB" id="6NEP"/>
    </source>
</evidence>
<evidence type="ECO:0007829" key="10">
    <source>
        <dbReference type="PDB" id="6UCC"/>
    </source>
</evidence>
<keyword id="KW-0002">3D-structure</keyword>
<keyword id="KW-0025">Alternative splicing</keyword>
<keyword id="KW-0966">Cell projection</keyword>
<keyword id="KW-0969">Cilium</keyword>
<keyword id="KW-0963">Cytoplasm</keyword>
<keyword id="KW-0206">Cytoskeleton</keyword>
<keyword id="KW-0282">Flagellum</keyword>
<keyword id="KW-1267">Proteomics identification</keyword>
<keyword id="KW-1185">Reference proteome</keyword>
<organism>
    <name type="scientific">Homo sapiens</name>
    <name type="common">Human</name>
    <dbReference type="NCBI Taxonomy" id="9606"/>
    <lineage>
        <taxon>Eukaryota</taxon>
        <taxon>Metazoa</taxon>
        <taxon>Chordata</taxon>
        <taxon>Craniata</taxon>
        <taxon>Vertebrata</taxon>
        <taxon>Euteleostomi</taxon>
        <taxon>Mammalia</taxon>
        <taxon>Eutheria</taxon>
        <taxon>Euarchontoglires</taxon>
        <taxon>Primates</taxon>
        <taxon>Haplorrhini</taxon>
        <taxon>Catarrhini</taxon>
        <taxon>Hominidae</taxon>
        <taxon>Homo</taxon>
    </lineage>
</organism>
<dbReference type="EMBL" id="AF546872">
    <property type="protein sequence ID" value="AAN37911.1"/>
    <property type="molecule type" value="mRNA"/>
</dbReference>
<dbReference type="EMBL" id="AK057286">
    <property type="protein sequence ID" value="BAB71410.1"/>
    <property type="molecule type" value="mRNA"/>
</dbReference>
<dbReference type="EMBL" id="AL031121">
    <property type="status" value="NOT_ANNOTATED_CDS"/>
    <property type="molecule type" value="Genomic_DNA"/>
</dbReference>
<dbReference type="EMBL" id="AL137182">
    <property type="status" value="NOT_ANNOTATED_CDS"/>
    <property type="molecule type" value="Genomic_DNA"/>
</dbReference>
<dbReference type="EMBL" id="AL354942">
    <property type="status" value="NOT_ANNOTATED_CDS"/>
    <property type="molecule type" value="Genomic_DNA"/>
</dbReference>
<dbReference type="EMBL" id="AP001576">
    <property type="status" value="NOT_ANNOTATED_CDS"/>
    <property type="molecule type" value="Genomic_DNA"/>
</dbReference>
<dbReference type="EMBL" id="AL078585">
    <property type="status" value="NOT_ANNOTATED_CDS"/>
    <property type="molecule type" value="Genomic_DNA"/>
</dbReference>
<dbReference type="EMBL" id="AL590286">
    <property type="status" value="NOT_ANNOTATED_CDS"/>
    <property type="molecule type" value="Genomic_DNA"/>
</dbReference>
<dbReference type="EMBL" id="AL603788">
    <property type="status" value="NOT_ANNOTATED_CDS"/>
    <property type="molecule type" value="Genomic_DNA"/>
</dbReference>
<dbReference type="EMBL" id="CH471051">
    <property type="protein sequence ID" value="EAW47565.1"/>
    <property type="molecule type" value="Genomic_DNA"/>
</dbReference>
<dbReference type="EMBL" id="CH471051">
    <property type="protein sequence ID" value="EAW47566.1"/>
    <property type="molecule type" value="Genomic_DNA"/>
</dbReference>
<dbReference type="EMBL" id="BC030642">
    <property type="protein sequence ID" value="AAH30642.1"/>
    <property type="molecule type" value="mRNA"/>
</dbReference>
<dbReference type="EMBL" id="BC044227">
    <property type="protein sequence ID" value="AAH44227.1"/>
    <property type="molecule type" value="mRNA"/>
</dbReference>
<dbReference type="EMBL" id="BK001670">
    <property type="protein sequence ID" value="DAA02134.1"/>
    <property type="molecule type" value="mRNA"/>
</dbReference>
<dbReference type="CCDS" id="CCDS43524.1">
    <molecule id="Q96M98-2"/>
</dbReference>
<dbReference type="CCDS" id="CCDS5284.1">
    <molecule id="Q96M98-1"/>
</dbReference>
<dbReference type="RefSeq" id="NP_001073847.1">
    <molecule id="Q96M98-2"/>
    <property type="nucleotide sequence ID" value="NM_001080378.2"/>
</dbReference>
<dbReference type="RefSeq" id="NP_001073848.1">
    <molecule id="Q96M98-2"/>
    <property type="nucleotide sequence ID" value="NM_001080379.2"/>
</dbReference>
<dbReference type="RefSeq" id="NP_689623.2">
    <molecule id="Q96M98-1"/>
    <property type="nucleotide sequence ID" value="NM_152410.3"/>
</dbReference>
<dbReference type="RefSeq" id="XP_047274164.1">
    <molecule id="Q96M98-2"/>
    <property type="nucleotide sequence ID" value="XM_047418208.1"/>
</dbReference>
<dbReference type="RefSeq" id="XP_054210265.1">
    <molecule id="Q96M98-2"/>
    <property type="nucleotide sequence ID" value="XM_054354290.1"/>
</dbReference>
<dbReference type="PDB" id="6NDU">
    <property type="method" value="X-ray"/>
    <property type="resolution" value="2.10 A"/>
    <property type="chains" value="A=70-296"/>
</dbReference>
<dbReference type="PDB" id="6NEP">
    <property type="method" value="X-ray"/>
    <property type="resolution" value="2.10 A"/>
    <property type="chains" value="A=70-296"/>
</dbReference>
<dbReference type="PDB" id="6UCC">
    <property type="method" value="X-ray"/>
    <property type="resolution" value="2.60 A"/>
    <property type="chains" value="A=1-296"/>
</dbReference>
<dbReference type="PDB" id="7UNG">
    <property type="method" value="EM"/>
    <property type="resolution" value="3.60 A"/>
    <property type="chains" value="YB/YC/YD/YE/YF/YG=1-296"/>
</dbReference>
<dbReference type="PDB" id="8J07">
    <property type="method" value="EM"/>
    <property type="resolution" value="4.10 A"/>
    <property type="chains" value="YB/YC/YD/YF/YG/YH/YI/YJ/YK/YL/YM=1-296"/>
</dbReference>
<dbReference type="PDBsum" id="6NDU"/>
<dbReference type="PDBsum" id="6NEP"/>
<dbReference type="PDBsum" id="6UCC"/>
<dbReference type="PDBsum" id="7UNG"/>
<dbReference type="PDBsum" id="8J07"/>
<dbReference type="EMDB" id="EMD-26624"/>
<dbReference type="EMDB" id="EMD-35888"/>
<dbReference type="SMR" id="Q96M98"/>
<dbReference type="BioGRID" id="126421">
    <property type="interactions" value="28"/>
</dbReference>
<dbReference type="CORUM" id="Q96M98"/>
<dbReference type="FunCoup" id="Q96M98">
    <property type="interactions" value="189"/>
</dbReference>
<dbReference type="IntAct" id="Q96M98">
    <property type="interactions" value="4"/>
</dbReference>
<dbReference type="STRING" id="9606.ENSP00000337946"/>
<dbReference type="iPTMnet" id="Q96M98"/>
<dbReference type="PhosphoSitePlus" id="Q96M98"/>
<dbReference type="BioMuta" id="PACRG"/>
<dbReference type="DMDM" id="77416872"/>
<dbReference type="MassIVE" id="Q96M98"/>
<dbReference type="PaxDb" id="9606-ENSP00000337946"/>
<dbReference type="PeptideAtlas" id="Q96M98"/>
<dbReference type="ProteomicsDB" id="77323">
    <molecule id="Q96M98-1"/>
</dbReference>
<dbReference type="ProteomicsDB" id="77324">
    <molecule id="Q96M98-2"/>
</dbReference>
<dbReference type="Antibodypedia" id="20047">
    <property type="antibodies" value="153 antibodies from 26 providers"/>
</dbReference>
<dbReference type="DNASU" id="135138"/>
<dbReference type="Ensembl" id="ENST00000337019.7">
    <molecule id="Q96M98-1"/>
    <property type="protein sequence ID" value="ENSP00000337946.3"/>
    <property type="gene ID" value="ENSG00000112530.13"/>
</dbReference>
<dbReference type="Ensembl" id="ENST00000366888.7">
    <molecule id="Q96M98-2"/>
    <property type="protein sequence ID" value="ENSP00000355854.2"/>
    <property type="gene ID" value="ENSG00000112530.13"/>
</dbReference>
<dbReference type="Ensembl" id="ENST00000366889.6">
    <molecule id="Q96M98-2"/>
    <property type="protein sequence ID" value="ENSP00000355855.2"/>
    <property type="gene ID" value="ENSG00000112530.13"/>
</dbReference>
<dbReference type="GeneID" id="135138"/>
<dbReference type="KEGG" id="hsa:135138"/>
<dbReference type="MANE-Select" id="ENST00000366888.7">
    <molecule id="Q96M98-2"/>
    <property type="protein sequence ID" value="ENSP00000355854.2"/>
    <property type="RefSeq nucleotide sequence ID" value="NM_001080379.2"/>
    <property type="RefSeq protein sequence ID" value="NP_001073848.1"/>
</dbReference>
<dbReference type="UCSC" id="uc003qua.4">
    <molecule id="Q96M98-1"/>
    <property type="organism name" value="human"/>
</dbReference>
<dbReference type="AGR" id="HGNC:19152"/>
<dbReference type="CTD" id="135138"/>
<dbReference type="DisGeNET" id="135138"/>
<dbReference type="GeneCards" id="PACRG"/>
<dbReference type="HGNC" id="HGNC:19152">
    <property type="gene designation" value="PACRG"/>
</dbReference>
<dbReference type="HPA" id="ENSG00000112530">
    <property type="expression patterns" value="Tissue enhanced (fallopian tube, testis)"/>
</dbReference>
<dbReference type="MalaCards" id="PACRG"/>
<dbReference type="MIM" id="607572">
    <property type="type" value="phenotype"/>
</dbReference>
<dbReference type="MIM" id="608427">
    <property type="type" value="gene"/>
</dbReference>
<dbReference type="neXtProt" id="NX_Q96M98"/>
<dbReference type="OpenTargets" id="ENSG00000112530"/>
<dbReference type="PharmGKB" id="PA134909011"/>
<dbReference type="VEuPathDB" id="HostDB:ENSG00000112530"/>
<dbReference type="eggNOG" id="KOG3961">
    <property type="taxonomic scope" value="Eukaryota"/>
</dbReference>
<dbReference type="GeneTree" id="ENSGT00940000157330"/>
<dbReference type="HOGENOM" id="CLU_073223_1_0_1"/>
<dbReference type="InParanoid" id="Q96M98"/>
<dbReference type="OMA" id="INGPIHE"/>
<dbReference type="OrthoDB" id="9479932at2759"/>
<dbReference type="PAN-GO" id="Q96M98">
    <property type="GO annotations" value="7 GO annotations based on evolutionary models"/>
</dbReference>
<dbReference type="PhylomeDB" id="Q96M98"/>
<dbReference type="TreeFam" id="TF321123"/>
<dbReference type="PathwayCommons" id="Q96M98"/>
<dbReference type="SignaLink" id="Q96M98"/>
<dbReference type="SIGNOR" id="Q96M98"/>
<dbReference type="BioGRID-ORCS" id="135138">
    <property type="hits" value="7 hits in 1141 CRISPR screens"/>
</dbReference>
<dbReference type="ChiTaRS" id="PACRG">
    <property type="organism name" value="human"/>
</dbReference>
<dbReference type="GeneWiki" id="PACRG"/>
<dbReference type="GenomeRNAi" id="135138"/>
<dbReference type="Pharos" id="Q96M98">
    <property type="development level" value="Tbio"/>
</dbReference>
<dbReference type="PRO" id="PR:Q96M98"/>
<dbReference type="Proteomes" id="UP000005640">
    <property type="component" value="Chromosome 6"/>
</dbReference>
<dbReference type="RNAct" id="Q96M98">
    <property type="molecule type" value="protein"/>
</dbReference>
<dbReference type="Bgee" id="ENSG00000112530">
    <property type="expression patterns" value="Expressed in bronchial epithelial cell and 124 other cell types or tissues"/>
</dbReference>
<dbReference type="ExpressionAtlas" id="Q96M98">
    <property type="expression patterns" value="baseline and differential"/>
</dbReference>
<dbReference type="GO" id="GO:0160112">
    <property type="term" value="C:axonemal B tubule inner sheath"/>
    <property type="evidence" value="ECO:0007669"/>
    <property type="project" value="Ensembl"/>
</dbReference>
<dbReference type="GO" id="GO:0005879">
    <property type="term" value="C:axonemal microtubule"/>
    <property type="evidence" value="ECO:0000314"/>
    <property type="project" value="UniProtKB"/>
</dbReference>
<dbReference type="GO" id="GO:0044297">
    <property type="term" value="C:cell body"/>
    <property type="evidence" value="ECO:0007669"/>
    <property type="project" value="Ensembl"/>
</dbReference>
<dbReference type="GO" id="GO:0005829">
    <property type="term" value="C:cytosol"/>
    <property type="evidence" value="ECO:0000314"/>
    <property type="project" value="ParkinsonsUK-UCL"/>
</dbReference>
<dbReference type="GO" id="GO:0097386">
    <property type="term" value="C:glial cell projection"/>
    <property type="evidence" value="ECO:0007669"/>
    <property type="project" value="Ensembl"/>
</dbReference>
<dbReference type="GO" id="GO:0002177">
    <property type="term" value="C:manchette"/>
    <property type="evidence" value="ECO:0007669"/>
    <property type="project" value="Ensembl"/>
</dbReference>
<dbReference type="GO" id="GO:0043005">
    <property type="term" value="C:neuron projection"/>
    <property type="evidence" value="ECO:0000314"/>
    <property type="project" value="ParkinsonsUK-UCL"/>
</dbReference>
<dbReference type="GO" id="GO:0005634">
    <property type="term" value="C:nucleus"/>
    <property type="evidence" value="ECO:0007005"/>
    <property type="project" value="UniProtKB"/>
</dbReference>
<dbReference type="GO" id="GO:0097225">
    <property type="term" value="C:sperm midpiece"/>
    <property type="evidence" value="ECO:0007669"/>
    <property type="project" value="Ensembl"/>
</dbReference>
<dbReference type="GO" id="GO:0031982">
    <property type="term" value="C:vesicle"/>
    <property type="evidence" value="ECO:0000314"/>
    <property type="project" value="ParkinsonsUK-UCL"/>
</dbReference>
<dbReference type="GO" id="GO:0003779">
    <property type="term" value="F:actin binding"/>
    <property type="evidence" value="ECO:0000314"/>
    <property type="project" value="ParkinsonsUK-UCL"/>
</dbReference>
<dbReference type="GO" id="GO:0043014">
    <property type="term" value="F:alpha-tubulin binding"/>
    <property type="evidence" value="ECO:0000314"/>
    <property type="project" value="ParkinsonsUK-UCL"/>
</dbReference>
<dbReference type="GO" id="GO:0048487">
    <property type="term" value="F:beta-tubulin binding"/>
    <property type="evidence" value="ECO:0000314"/>
    <property type="project" value="ParkinsonsUK-UCL"/>
</dbReference>
<dbReference type="GO" id="GO:0001664">
    <property type="term" value="F:G protein-coupled receptor binding"/>
    <property type="evidence" value="ECO:0000353"/>
    <property type="project" value="ParkinsonsUK-UCL"/>
</dbReference>
<dbReference type="GO" id="GO:0031072">
    <property type="term" value="F:heat shock protein binding"/>
    <property type="evidence" value="ECO:0000353"/>
    <property type="project" value="ParkinsonsUK-UCL"/>
</dbReference>
<dbReference type="GO" id="GO:0030544">
    <property type="term" value="F:Hsp70 protein binding"/>
    <property type="evidence" value="ECO:0000314"/>
    <property type="project" value="ParkinsonsUK-UCL"/>
</dbReference>
<dbReference type="GO" id="GO:0051879">
    <property type="term" value="F:Hsp90 protein binding"/>
    <property type="evidence" value="ECO:0000314"/>
    <property type="project" value="ParkinsonsUK-UCL"/>
</dbReference>
<dbReference type="GO" id="GO:0051087">
    <property type="term" value="F:protein-folding chaperone binding"/>
    <property type="evidence" value="ECO:0000353"/>
    <property type="project" value="ParkinsonsUK-UCL"/>
</dbReference>
<dbReference type="GO" id="GO:0031625">
    <property type="term" value="F:ubiquitin protein ligase binding"/>
    <property type="evidence" value="ECO:0000353"/>
    <property type="project" value="ParkinsonsUK-UCL"/>
</dbReference>
<dbReference type="GO" id="GO:0034620">
    <property type="term" value="P:cellular response to unfolded protein"/>
    <property type="evidence" value="ECO:0000304"/>
    <property type="project" value="ParkinsonsUK-UCL"/>
</dbReference>
<dbReference type="GO" id="GO:0030317">
    <property type="term" value="P:flagellated sperm motility"/>
    <property type="evidence" value="ECO:0007669"/>
    <property type="project" value="Ensembl"/>
</dbReference>
<dbReference type="GO" id="GO:0008104">
    <property type="term" value="P:protein localization"/>
    <property type="evidence" value="ECO:0007669"/>
    <property type="project" value="Ensembl"/>
</dbReference>
<dbReference type="GO" id="GO:0007286">
    <property type="term" value="P:spermatid development"/>
    <property type="evidence" value="ECO:0007669"/>
    <property type="project" value="Ensembl"/>
</dbReference>
<dbReference type="InterPro" id="IPR019399">
    <property type="entry name" value="Parkin_co-regulated_protein"/>
</dbReference>
<dbReference type="PANTHER" id="PTHR21207:SF2">
    <property type="entry name" value="PARKIN COREGULATED GENE PROTEIN"/>
    <property type="match status" value="1"/>
</dbReference>
<dbReference type="PANTHER" id="PTHR21207">
    <property type="entry name" value="PARKIN COREGULATED GENE PROTEIN PARK2 COREGULATED"/>
    <property type="match status" value="1"/>
</dbReference>
<dbReference type="Pfam" id="PF10274">
    <property type="entry name" value="ParcG"/>
    <property type="match status" value="2"/>
</dbReference>
<sequence length="296" mass="33342">MVAEKETLSLNKCPDKMPKRTKLLAQQPLPVHQPHSLVSEGFTVKAMMKNSVVRGPPAAGAFKERPTKPTAFRKFYERGDFPIALEHDSKGNKIAWKVEIEKLDYHHYLPLFFDGLCEMTFPYEFFARQGIHDMLEHGGNKILPVLPQLIIPIKNALNLRNRQVICVTLKVLQHLVVSAEMVGKALVPYYRQILPVLNIFKNMNGSYSLPRLECSGAIMARCNLDHLGSSDPPTSASQVAEIIVNSGDGIDYSQQKRENIGDLIQETLEAFERYGGENAFINIKYVVPTYESCLLN</sequence>
<feature type="chain" id="PRO_0000058169" description="Parkin coregulated gene protein">
    <location>
        <begin position="1"/>
        <end position="296"/>
    </location>
</feature>
<feature type="splice variant" id="VSP_010033" description="In isoform 2." evidence="5 6">
    <location>
        <begin position="205"/>
        <end position="243"/>
    </location>
</feature>
<feature type="sequence conflict" description="In Ref. 2; BAB71410." evidence="7" ref="2">
    <original>K</original>
    <variation>R</variation>
    <location>
        <position position="93"/>
    </location>
</feature>
<feature type="sequence conflict" description="In Ref. 5; AAH30642." evidence="7" ref="5">
    <original>A</original>
    <variation>T</variation>
    <location>
        <position position="185"/>
    </location>
</feature>
<feature type="helix" evidence="9">
    <location>
        <begin position="70"/>
        <end position="77"/>
    </location>
</feature>
<feature type="strand" evidence="10">
    <location>
        <begin position="78"/>
        <end position="80"/>
    </location>
</feature>
<feature type="strand" evidence="9">
    <location>
        <begin position="96"/>
        <end position="98"/>
    </location>
</feature>
<feature type="helix" evidence="9">
    <location>
        <begin position="100"/>
        <end position="102"/>
    </location>
</feature>
<feature type="helix" evidence="9">
    <location>
        <begin position="105"/>
        <end position="114"/>
    </location>
</feature>
<feature type="helix" evidence="9">
    <location>
        <begin position="115"/>
        <end position="117"/>
    </location>
</feature>
<feature type="helix" evidence="9">
    <location>
        <begin position="123"/>
        <end position="138"/>
    </location>
</feature>
<feature type="helix" evidence="9">
    <location>
        <begin position="139"/>
        <end position="141"/>
    </location>
</feature>
<feature type="helix" evidence="9">
    <location>
        <begin position="143"/>
        <end position="145"/>
    </location>
</feature>
<feature type="helix" evidence="9">
    <location>
        <begin position="146"/>
        <end position="157"/>
    </location>
</feature>
<feature type="helix" evidence="9">
    <location>
        <begin position="162"/>
        <end position="178"/>
    </location>
</feature>
<feature type="helix" evidence="9">
    <location>
        <begin position="182"/>
        <end position="186"/>
    </location>
</feature>
<feature type="helix" evidence="9">
    <location>
        <begin position="187"/>
        <end position="189"/>
    </location>
</feature>
<feature type="helix" evidence="9">
    <location>
        <begin position="190"/>
        <end position="193"/>
    </location>
</feature>
<feature type="helix" evidence="9">
    <location>
        <begin position="197"/>
        <end position="200"/>
    </location>
</feature>
<feature type="helix" evidence="9">
    <location>
        <begin position="260"/>
        <end position="274"/>
    </location>
</feature>
<feature type="helix" evidence="9">
    <location>
        <begin position="279"/>
        <end position="286"/>
    </location>
</feature>
<reference key="1">
    <citation type="journal article" date="2003" name="J. Mol. Biol.">
        <title>Identification of a novel gene linked to parkin via a bi-directional promoter.</title>
        <authorList>
            <person name="West A.B."/>
            <person name="Lockhart P.J."/>
            <person name="O'Farell C."/>
            <person name="Farrer M.J."/>
        </authorList>
    </citation>
    <scope>NUCLEOTIDE SEQUENCE [MRNA] (ISOFORM 2)</scope>
</reference>
<reference key="2">
    <citation type="journal article" date="2004" name="Nat. Genet.">
        <title>Complete sequencing and characterization of 21,243 full-length human cDNAs.</title>
        <authorList>
            <person name="Ota T."/>
            <person name="Suzuki Y."/>
            <person name="Nishikawa T."/>
            <person name="Otsuki T."/>
            <person name="Sugiyama T."/>
            <person name="Irie R."/>
            <person name="Wakamatsu A."/>
            <person name="Hayashi K."/>
            <person name="Sato H."/>
            <person name="Nagai K."/>
            <person name="Kimura K."/>
            <person name="Makita H."/>
            <person name="Sekine M."/>
            <person name="Obayashi M."/>
            <person name="Nishi T."/>
            <person name="Shibahara T."/>
            <person name="Tanaka T."/>
            <person name="Ishii S."/>
            <person name="Yamamoto J."/>
            <person name="Saito K."/>
            <person name="Kawai Y."/>
            <person name="Isono Y."/>
            <person name="Nakamura Y."/>
            <person name="Nagahari K."/>
            <person name="Murakami K."/>
            <person name="Yasuda T."/>
            <person name="Iwayanagi T."/>
            <person name="Wagatsuma M."/>
            <person name="Shiratori A."/>
            <person name="Sudo H."/>
            <person name="Hosoiri T."/>
            <person name="Kaku Y."/>
            <person name="Kodaira H."/>
            <person name="Kondo H."/>
            <person name="Sugawara M."/>
            <person name="Takahashi M."/>
            <person name="Kanda K."/>
            <person name="Yokoi T."/>
            <person name="Furuya T."/>
            <person name="Kikkawa E."/>
            <person name="Omura Y."/>
            <person name="Abe K."/>
            <person name="Kamihara K."/>
            <person name="Katsuta N."/>
            <person name="Sato K."/>
            <person name="Tanikawa M."/>
            <person name="Yamazaki M."/>
            <person name="Ninomiya K."/>
            <person name="Ishibashi T."/>
            <person name="Yamashita H."/>
            <person name="Murakawa K."/>
            <person name="Fujimori K."/>
            <person name="Tanai H."/>
            <person name="Kimata M."/>
            <person name="Watanabe M."/>
            <person name="Hiraoka S."/>
            <person name="Chiba Y."/>
            <person name="Ishida S."/>
            <person name="Ono Y."/>
            <person name="Takiguchi S."/>
            <person name="Watanabe S."/>
            <person name="Yosida M."/>
            <person name="Hotuta T."/>
            <person name="Kusano J."/>
            <person name="Kanehori K."/>
            <person name="Takahashi-Fujii A."/>
            <person name="Hara H."/>
            <person name="Tanase T.-O."/>
            <person name="Nomura Y."/>
            <person name="Togiya S."/>
            <person name="Komai F."/>
            <person name="Hara R."/>
            <person name="Takeuchi K."/>
            <person name="Arita M."/>
            <person name="Imose N."/>
            <person name="Musashino K."/>
            <person name="Yuuki H."/>
            <person name="Oshima A."/>
            <person name="Sasaki N."/>
            <person name="Aotsuka S."/>
            <person name="Yoshikawa Y."/>
            <person name="Matsunawa H."/>
            <person name="Ichihara T."/>
            <person name="Shiohata N."/>
            <person name="Sano S."/>
            <person name="Moriya S."/>
            <person name="Momiyama H."/>
            <person name="Satoh N."/>
            <person name="Takami S."/>
            <person name="Terashima Y."/>
            <person name="Suzuki O."/>
            <person name="Nakagawa S."/>
            <person name="Senoh A."/>
            <person name="Mizoguchi H."/>
            <person name="Goto Y."/>
            <person name="Shimizu F."/>
            <person name="Wakebe H."/>
            <person name="Hishigaki H."/>
            <person name="Watanabe T."/>
            <person name="Sugiyama A."/>
            <person name="Takemoto M."/>
            <person name="Kawakami B."/>
            <person name="Yamazaki M."/>
            <person name="Watanabe K."/>
            <person name="Kumagai A."/>
            <person name="Itakura S."/>
            <person name="Fukuzumi Y."/>
            <person name="Fujimori Y."/>
            <person name="Komiyama M."/>
            <person name="Tashiro H."/>
            <person name="Tanigami A."/>
            <person name="Fujiwara T."/>
            <person name="Ono T."/>
            <person name="Yamada K."/>
            <person name="Fujii Y."/>
            <person name="Ozaki K."/>
            <person name="Hirao M."/>
            <person name="Ohmori Y."/>
            <person name="Kawabata A."/>
            <person name="Hikiji T."/>
            <person name="Kobatake N."/>
            <person name="Inagaki H."/>
            <person name="Ikema Y."/>
            <person name="Okamoto S."/>
            <person name="Okitani R."/>
            <person name="Kawakami T."/>
            <person name="Noguchi S."/>
            <person name="Itoh T."/>
            <person name="Shigeta K."/>
            <person name="Senba T."/>
            <person name="Matsumura K."/>
            <person name="Nakajima Y."/>
            <person name="Mizuno T."/>
            <person name="Morinaga M."/>
            <person name="Sasaki M."/>
            <person name="Togashi T."/>
            <person name="Oyama M."/>
            <person name="Hata H."/>
            <person name="Watanabe M."/>
            <person name="Komatsu T."/>
            <person name="Mizushima-Sugano J."/>
            <person name="Satoh T."/>
            <person name="Shirai Y."/>
            <person name="Takahashi Y."/>
            <person name="Nakagawa K."/>
            <person name="Okumura K."/>
            <person name="Nagase T."/>
            <person name="Nomura N."/>
            <person name="Kikuchi H."/>
            <person name="Masuho Y."/>
            <person name="Yamashita R."/>
            <person name="Nakai K."/>
            <person name="Yada T."/>
            <person name="Nakamura Y."/>
            <person name="Ohara O."/>
            <person name="Isogai T."/>
            <person name="Sugano S."/>
        </authorList>
    </citation>
    <scope>NUCLEOTIDE SEQUENCE [LARGE SCALE MRNA] (ISOFORM 1)</scope>
    <source>
        <tissue>Testis</tissue>
    </source>
</reference>
<reference key="3">
    <citation type="journal article" date="2003" name="Nature">
        <title>The DNA sequence and analysis of human chromosome 6.</title>
        <authorList>
            <person name="Mungall A.J."/>
            <person name="Palmer S.A."/>
            <person name="Sims S.K."/>
            <person name="Edwards C.A."/>
            <person name="Ashurst J.L."/>
            <person name="Wilming L."/>
            <person name="Jones M.C."/>
            <person name="Horton R."/>
            <person name="Hunt S.E."/>
            <person name="Scott C.E."/>
            <person name="Gilbert J.G.R."/>
            <person name="Clamp M.E."/>
            <person name="Bethel G."/>
            <person name="Milne S."/>
            <person name="Ainscough R."/>
            <person name="Almeida J.P."/>
            <person name="Ambrose K.D."/>
            <person name="Andrews T.D."/>
            <person name="Ashwell R.I.S."/>
            <person name="Babbage A.K."/>
            <person name="Bagguley C.L."/>
            <person name="Bailey J."/>
            <person name="Banerjee R."/>
            <person name="Barker D.J."/>
            <person name="Barlow K.F."/>
            <person name="Bates K."/>
            <person name="Beare D.M."/>
            <person name="Beasley H."/>
            <person name="Beasley O."/>
            <person name="Bird C.P."/>
            <person name="Blakey S.E."/>
            <person name="Bray-Allen S."/>
            <person name="Brook J."/>
            <person name="Brown A.J."/>
            <person name="Brown J.Y."/>
            <person name="Burford D.C."/>
            <person name="Burrill W."/>
            <person name="Burton J."/>
            <person name="Carder C."/>
            <person name="Carter N.P."/>
            <person name="Chapman J.C."/>
            <person name="Clark S.Y."/>
            <person name="Clark G."/>
            <person name="Clee C.M."/>
            <person name="Clegg S."/>
            <person name="Cobley V."/>
            <person name="Collier R.E."/>
            <person name="Collins J.E."/>
            <person name="Colman L.K."/>
            <person name="Corby N.R."/>
            <person name="Coville G.J."/>
            <person name="Culley K.M."/>
            <person name="Dhami P."/>
            <person name="Davies J."/>
            <person name="Dunn M."/>
            <person name="Earthrowl M.E."/>
            <person name="Ellington A.E."/>
            <person name="Evans K.A."/>
            <person name="Faulkner L."/>
            <person name="Francis M.D."/>
            <person name="Frankish A."/>
            <person name="Frankland J."/>
            <person name="French L."/>
            <person name="Garner P."/>
            <person name="Garnett J."/>
            <person name="Ghori M.J."/>
            <person name="Gilby L.M."/>
            <person name="Gillson C.J."/>
            <person name="Glithero R.J."/>
            <person name="Grafham D.V."/>
            <person name="Grant M."/>
            <person name="Gribble S."/>
            <person name="Griffiths C."/>
            <person name="Griffiths M.N.D."/>
            <person name="Hall R."/>
            <person name="Halls K.S."/>
            <person name="Hammond S."/>
            <person name="Harley J.L."/>
            <person name="Hart E.A."/>
            <person name="Heath P.D."/>
            <person name="Heathcott R."/>
            <person name="Holmes S.J."/>
            <person name="Howden P.J."/>
            <person name="Howe K.L."/>
            <person name="Howell G.R."/>
            <person name="Huckle E."/>
            <person name="Humphray S.J."/>
            <person name="Humphries M.D."/>
            <person name="Hunt A.R."/>
            <person name="Johnson C.M."/>
            <person name="Joy A.A."/>
            <person name="Kay M."/>
            <person name="Keenan S.J."/>
            <person name="Kimberley A.M."/>
            <person name="King A."/>
            <person name="Laird G.K."/>
            <person name="Langford C."/>
            <person name="Lawlor S."/>
            <person name="Leongamornlert D.A."/>
            <person name="Leversha M."/>
            <person name="Lloyd C.R."/>
            <person name="Lloyd D.M."/>
            <person name="Loveland J.E."/>
            <person name="Lovell J."/>
            <person name="Martin S."/>
            <person name="Mashreghi-Mohammadi M."/>
            <person name="Maslen G.L."/>
            <person name="Matthews L."/>
            <person name="McCann O.T."/>
            <person name="McLaren S.J."/>
            <person name="McLay K."/>
            <person name="McMurray A."/>
            <person name="Moore M.J.F."/>
            <person name="Mullikin J.C."/>
            <person name="Niblett D."/>
            <person name="Nickerson T."/>
            <person name="Novik K.L."/>
            <person name="Oliver K."/>
            <person name="Overton-Larty E.K."/>
            <person name="Parker A."/>
            <person name="Patel R."/>
            <person name="Pearce A.V."/>
            <person name="Peck A.I."/>
            <person name="Phillimore B.J.C.T."/>
            <person name="Phillips S."/>
            <person name="Plumb R.W."/>
            <person name="Porter K.M."/>
            <person name="Ramsey Y."/>
            <person name="Ranby S.A."/>
            <person name="Rice C.M."/>
            <person name="Ross M.T."/>
            <person name="Searle S.M."/>
            <person name="Sehra H.K."/>
            <person name="Sheridan E."/>
            <person name="Skuce C.D."/>
            <person name="Smith S."/>
            <person name="Smith M."/>
            <person name="Spraggon L."/>
            <person name="Squares S.L."/>
            <person name="Steward C.A."/>
            <person name="Sycamore N."/>
            <person name="Tamlyn-Hall G."/>
            <person name="Tester J."/>
            <person name="Theaker A.J."/>
            <person name="Thomas D.W."/>
            <person name="Thorpe A."/>
            <person name="Tracey A."/>
            <person name="Tromans A."/>
            <person name="Tubby B."/>
            <person name="Wall M."/>
            <person name="Wallis J.M."/>
            <person name="West A.P."/>
            <person name="White S.S."/>
            <person name="Whitehead S.L."/>
            <person name="Whittaker H."/>
            <person name="Wild A."/>
            <person name="Willey D.J."/>
            <person name="Wilmer T.E."/>
            <person name="Wood J.M."/>
            <person name="Wray P.W."/>
            <person name="Wyatt J.C."/>
            <person name="Young L."/>
            <person name="Younger R.M."/>
            <person name="Bentley D.R."/>
            <person name="Coulson A."/>
            <person name="Durbin R.M."/>
            <person name="Hubbard T."/>
            <person name="Sulston J.E."/>
            <person name="Dunham I."/>
            <person name="Rogers J."/>
            <person name="Beck S."/>
        </authorList>
    </citation>
    <scope>NUCLEOTIDE SEQUENCE [LARGE SCALE GENOMIC DNA]</scope>
</reference>
<reference key="4">
    <citation type="submission" date="2005-09" db="EMBL/GenBank/DDBJ databases">
        <authorList>
            <person name="Mural R.J."/>
            <person name="Istrail S."/>
            <person name="Sutton G.G."/>
            <person name="Florea L."/>
            <person name="Halpern A.L."/>
            <person name="Mobarry C.M."/>
            <person name="Lippert R."/>
            <person name="Walenz B."/>
            <person name="Shatkay H."/>
            <person name="Dew I."/>
            <person name="Miller J.R."/>
            <person name="Flanigan M.J."/>
            <person name="Edwards N.J."/>
            <person name="Bolanos R."/>
            <person name="Fasulo D."/>
            <person name="Halldorsson B.V."/>
            <person name="Hannenhalli S."/>
            <person name="Turner R."/>
            <person name="Yooseph S."/>
            <person name="Lu F."/>
            <person name="Nusskern D.R."/>
            <person name="Shue B.C."/>
            <person name="Zheng X.H."/>
            <person name="Zhong F."/>
            <person name="Delcher A.L."/>
            <person name="Huson D.H."/>
            <person name="Kravitz S.A."/>
            <person name="Mouchard L."/>
            <person name="Reinert K."/>
            <person name="Remington K.A."/>
            <person name="Clark A.G."/>
            <person name="Waterman M.S."/>
            <person name="Eichler E.E."/>
            <person name="Adams M.D."/>
            <person name="Hunkapiller M.W."/>
            <person name="Myers E.W."/>
            <person name="Venter J.C."/>
        </authorList>
    </citation>
    <scope>NUCLEOTIDE SEQUENCE [LARGE SCALE GENOMIC DNA]</scope>
</reference>
<reference key="5">
    <citation type="journal article" date="2004" name="Genome Res.">
        <title>The status, quality, and expansion of the NIH full-length cDNA project: the Mammalian Gene Collection (MGC).</title>
        <authorList>
            <consortium name="The MGC Project Team"/>
        </authorList>
    </citation>
    <scope>NUCLEOTIDE SEQUENCE [LARGE SCALE MRNA] (ISOFORM 2)</scope>
    <source>
        <tissue>Testis</tissue>
    </source>
</reference>
<reference key="6">
    <citation type="journal article" date="2003" name="J. Biol. Chem.">
        <title>A product of the human gene adjacent to parkin is a component of Lewy bodies and suppresses Pael receptor-induced cell death.</title>
        <authorList>
            <person name="Imai Y."/>
            <person name="Soda M."/>
            <person name="Murakami T."/>
            <person name="Shoji M."/>
            <person name="Abe K."/>
            <person name="Takahashi R."/>
        </authorList>
    </citation>
    <scope>IDENTIFICATION</scope>
    <scope>FUNCTION</scope>
    <scope>INTERACTION WITH STIP1; PRKN; GPR37; HSPA8; TCP1; CCT2; CCT3; CCT4; CCT5; CCT6A; CCT7 AND CCT8</scope>
</reference>
<reference evidence="8" key="7">
    <citation type="journal article" date="2022" name="Proc. Natl. Acad. Sci. U.S.A.">
        <title>SPACA9 is a lumenal protein of human ciliary singlet and doublet microtubules.</title>
        <authorList>
            <person name="Gui M."/>
            <person name="Croft J.T."/>
            <person name="Zabeo D."/>
            <person name="Acharya V."/>
            <person name="Kollman J.M."/>
            <person name="Burgoyne T."/>
            <person name="Hoog J.L."/>
            <person name="Brown A."/>
        </authorList>
    </citation>
    <scope>STRUCTURE BY ELECTRON MICROSCOPY (3.60 ANGSTROMS)</scope>
    <scope>FUNCTION</scope>
    <scope>SUBCELLULAR LOCATION</scope>
    <scope>TISSUE SPECIFICITY</scope>
</reference>
<reference key="8">
    <citation type="journal article" date="2004" name="Nature">
        <title>Susceptibility to leprosy is associated with PARK2 and PACRG.</title>
        <authorList>
            <person name="Mira M.T."/>
            <person name="Alcais A."/>
            <person name="Nguyen V.T."/>
            <person name="Moraes M.O."/>
            <person name="Di Flumeri C."/>
            <person name="Vu H.T."/>
            <person name="Mai C.P."/>
            <person name="Nguyen T.H."/>
            <person name="Nguyen N.B."/>
            <person name="Pham X.K."/>
            <person name="Sarno E.N."/>
            <person name="Alter A."/>
            <person name="Montpetit A."/>
            <person name="Moraes M.E."/>
            <person name="Moraes J.R."/>
            <person name="Dore C."/>
            <person name="Gallant C.J."/>
            <person name="Lepage P."/>
            <person name="Verner A."/>
            <person name="Van De Vosse E."/>
            <person name="Hudson T.J."/>
            <person name="Abel L."/>
            <person name="Schurr E."/>
        </authorList>
    </citation>
    <scope>TISSUE SPECIFICITY</scope>
    <scope>POLYMORPHISM</scope>
    <scope>INVOLVEMENT IN LPRS2</scope>
</reference>
<proteinExistence type="evidence at protein level"/>
<accession>Q96M98</accession>
<accession>E1P5B5</accession>
<accession>Q6IMB8</accession>
<accession>Q8IZM1</accession>
<accession>Q8NHP5</accession>
<accession>Q9H1V9</accession>